<name>RIMK_PSESM</name>
<sequence>MKIAVLSRNPRLYSTRRLVEAGIERGHEMVVIDTLRAYMNIASHKPQIHYRGKPLEGFDAVIPRIGASVTFYGCAVLRQFEMMGVFPLNESVAIARSRDKLRSLQLLSRRGIGLPVTGFAHSPDDIPDLIQMVNGAPLVIKVLEGTQGIGVVLCETATAAESVIEAFMGLKQDIMVQEYIKEAGGADIRCFVVGDKVIASMKRQAKPGEFRSNLHRGGSASLIKITPEERMTALRAAKVMGLSVAGVDILRSNHGPLVMEVNSSPGLEGIEVTTSKDVAGMIIEYLEKNSGPHMTRTKGKG</sequence>
<accession>Q88AZ9</accession>
<dbReference type="EC" id="6.3.2.-" evidence="1"/>
<dbReference type="EMBL" id="AE016853">
    <property type="protein sequence ID" value="AAO53780.1"/>
    <property type="molecule type" value="Genomic_DNA"/>
</dbReference>
<dbReference type="RefSeq" id="NP_790085.1">
    <property type="nucleotide sequence ID" value="NC_004578.1"/>
</dbReference>
<dbReference type="RefSeq" id="WP_003318100.1">
    <property type="nucleotide sequence ID" value="NC_004578.1"/>
</dbReference>
<dbReference type="PDB" id="7QYS">
    <property type="method" value="X-ray"/>
    <property type="resolution" value="2.90 A"/>
    <property type="chains" value="A/B/C/D/E/F/G/H/I/J/K/L/M/N/O/P=1-301"/>
</dbReference>
<dbReference type="PDBsum" id="7QYS"/>
<dbReference type="SMR" id="Q88AZ9"/>
<dbReference type="STRING" id="223283.PSPTO_0234"/>
<dbReference type="GeneID" id="96216506"/>
<dbReference type="KEGG" id="pst:PSPTO_0234"/>
<dbReference type="PATRIC" id="fig|223283.9.peg.245"/>
<dbReference type="eggNOG" id="COG0189">
    <property type="taxonomic scope" value="Bacteria"/>
</dbReference>
<dbReference type="HOGENOM" id="CLU_054353_0_1_6"/>
<dbReference type="OrthoDB" id="3865600at2"/>
<dbReference type="PhylomeDB" id="Q88AZ9"/>
<dbReference type="Proteomes" id="UP000002515">
    <property type="component" value="Chromosome"/>
</dbReference>
<dbReference type="GO" id="GO:0005737">
    <property type="term" value="C:cytoplasm"/>
    <property type="evidence" value="ECO:0007669"/>
    <property type="project" value="TreeGrafter"/>
</dbReference>
<dbReference type="GO" id="GO:0005524">
    <property type="term" value="F:ATP binding"/>
    <property type="evidence" value="ECO:0007669"/>
    <property type="project" value="UniProtKB-UniRule"/>
</dbReference>
<dbReference type="GO" id="GO:0046872">
    <property type="term" value="F:metal ion binding"/>
    <property type="evidence" value="ECO:0007669"/>
    <property type="project" value="UniProtKB-KW"/>
</dbReference>
<dbReference type="GO" id="GO:0018169">
    <property type="term" value="F:ribosomal S6-glutamic acid ligase activity"/>
    <property type="evidence" value="ECO:0007669"/>
    <property type="project" value="TreeGrafter"/>
</dbReference>
<dbReference type="GO" id="GO:0036211">
    <property type="term" value="P:protein modification process"/>
    <property type="evidence" value="ECO:0007669"/>
    <property type="project" value="InterPro"/>
</dbReference>
<dbReference type="GO" id="GO:0009432">
    <property type="term" value="P:SOS response"/>
    <property type="evidence" value="ECO:0007669"/>
    <property type="project" value="TreeGrafter"/>
</dbReference>
<dbReference type="GO" id="GO:0006412">
    <property type="term" value="P:translation"/>
    <property type="evidence" value="ECO:0007669"/>
    <property type="project" value="UniProtKB-KW"/>
</dbReference>
<dbReference type="FunFam" id="3.40.50.20:FF:000004">
    <property type="entry name" value="Probable alpha-L-glutamate ligase"/>
    <property type="match status" value="1"/>
</dbReference>
<dbReference type="FunFam" id="3.30.1490.20:FF:000005">
    <property type="entry name" value="Probable alpha-L-glutamate ligase 1"/>
    <property type="match status" value="1"/>
</dbReference>
<dbReference type="FunFam" id="3.30.470.20:FF:000016">
    <property type="entry name" value="Ribosomal protein S6--L-glutamate ligase"/>
    <property type="match status" value="1"/>
</dbReference>
<dbReference type="Gene3D" id="3.40.50.20">
    <property type="match status" value="1"/>
</dbReference>
<dbReference type="Gene3D" id="3.30.1490.20">
    <property type="entry name" value="ATP-grasp fold, A domain"/>
    <property type="match status" value="1"/>
</dbReference>
<dbReference type="Gene3D" id="3.30.470.20">
    <property type="entry name" value="ATP-grasp fold, B domain"/>
    <property type="match status" value="1"/>
</dbReference>
<dbReference type="HAMAP" id="MF_01552">
    <property type="entry name" value="RimK"/>
    <property type="match status" value="1"/>
</dbReference>
<dbReference type="InterPro" id="IPR011761">
    <property type="entry name" value="ATP-grasp"/>
</dbReference>
<dbReference type="InterPro" id="IPR013651">
    <property type="entry name" value="ATP-grasp_RimK-type"/>
</dbReference>
<dbReference type="InterPro" id="IPR013815">
    <property type="entry name" value="ATP_grasp_subdomain_1"/>
</dbReference>
<dbReference type="InterPro" id="IPR023533">
    <property type="entry name" value="RimK"/>
</dbReference>
<dbReference type="InterPro" id="IPR041107">
    <property type="entry name" value="Rimk_N"/>
</dbReference>
<dbReference type="InterPro" id="IPR004666">
    <property type="entry name" value="Rp_bS6_RimK/Lys_biosynth_LsyX"/>
</dbReference>
<dbReference type="NCBIfam" id="NF007764">
    <property type="entry name" value="PRK10446.1"/>
    <property type="match status" value="1"/>
</dbReference>
<dbReference type="NCBIfam" id="TIGR00768">
    <property type="entry name" value="rimK_fam"/>
    <property type="match status" value="1"/>
</dbReference>
<dbReference type="PANTHER" id="PTHR21621:SF7">
    <property type="entry name" value="RIBOSOMAL PROTEIN BS6--L-GLUTAMATE LIGASE"/>
    <property type="match status" value="1"/>
</dbReference>
<dbReference type="PANTHER" id="PTHR21621">
    <property type="entry name" value="RIBOSOMAL PROTEIN S6 MODIFICATION PROTEIN"/>
    <property type="match status" value="1"/>
</dbReference>
<dbReference type="Pfam" id="PF08443">
    <property type="entry name" value="RimK"/>
    <property type="match status" value="1"/>
</dbReference>
<dbReference type="Pfam" id="PF18030">
    <property type="entry name" value="Rimk_N"/>
    <property type="match status" value="1"/>
</dbReference>
<dbReference type="SUPFAM" id="SSF56059">
    <property type="entry name" value="Glutathione synthetase ATP-binding domain-like"/>
    <property type="match status" value="1"/>
</dbReference>
<dbReference type="PROSITE" id="PS50975">
    <property type="entry name" value="ATP_GRASP"/>
    <property type="match status" value="1"/>
</dbReference>
<protein>
    <recommendedName>
        <fullName evidence="1">Probable alpha-L-glutamate ligase</fullName>
        <ecNumber evidence="1">6.3.2.-</ecNumber>
    </recommendedName>
</protein>
<feature type="chain" id="PRO_0000205476" description="Probable alpha-L-glutamate ligase">
    <location>
        <begin position="1"/>
        <end position="301"/>
    </location>
</feature>
<feature type="domain" description="ATP-grasp" evidence="1">
    <location>
        <begin position="104"/>
        <end position="287"/>
    </location>
</feature>
<feature type="binding site" evidence="1">
    <location>
        <position position="141"/>
    </location>
    <ligand>
        <name>ATP</name>
        <dbReference type="ChEBI" id="CHEBI:30616"/>
    </ligand>
</feature>
<feature type="binding site" evidence="1">
    <location>
        <begin position="178"/>
        <end position="179"/>
    </location>
    <ligand>
        <name>ATP</name>
        <dbReference type="ChEBI" id="CHEBI:30616"/>
    </ligand>
</feature>
<feature type="binding site" evidence="1">
    <location>
        <position position="187"/>
    </location>
    <ligand>
        <name>ATP</name>
        <dbReference type="ChEBI" id="CHEBI:30616"/>
    </ligand>
</feature>
<feature type="binding site" evidence="1">
    <location>
        <begin position="211"/>
        <end position="213"/>
    </location>
    <ligand>
        <name>ATP</name>
        <dbReference type="ChEBI" id="CHEBI:30616"/>
    </ligand>
</feature>
<feature type="binding site" evidence="1">
    <location>
        <position position="248"/>
    </location>
    <ligand>
        <name>Mg(2+)</name>
        <dbReference type="ChEBI" id="CHEBI:18420"/>
        <label>1</label>
    </ligand>
</feature>
<feature type="binding site" evidence="1">
    <location>
        <position position="248"/>
    </location>
    <ligand>
        <name>Mn(2+)</name>
        <dbReference type="ChEBI" id="CHEBI:29035"/>
        <label>1</label>
    </ligand>
</feature>
<feature type="binding site" evidence="1">
    <location>
        <position position="260"/>
    </location>
    <ligand>
        <name>Mg(2+)</name>
        <dbReference type="ChEBI" id="CHEBI:18420"/>
        <label>1</label>
    </ligand>
</feature>
<feature type="binding site" evidence="1">
    <location>
        <position position="260"/>
    </location>
    <ligand>
        <name>Mg(2+)</name>
        <dbReference type="ChEBI" id="CHEBI:18420"/>
        <label>2</label>
    </ligand>
</feature>
<feature type="binding site" evidence="1">
    <location>
        <position position="260"/>
    </location>
    <ligand>
        <name>Mn(2+)</name>
        <dbReference type="ChEBI" id="CHEBI:29035"/>
        <label>1</label>
    </ligand>
</feature>
<feature type="binding site" evidence="1">
    <location>
        <position position="260"/>
    </location>
    <ligand>
        <name>Mn(2+)</name>
        <dbReference type="ChEBI" id="CHEBI:29035"/>
        <label>2</label>
    </ligand>
</feature>
<feature type="binding site" evidence="1">
    <location>
        <position position="262"/>
    </location>
    <ligand>
        <name>Mg(2+)</name>
        <dbReference type="ChEBI" id="CHEBI:18420"/>
        <label>2</label>
    </ligand>
</feature>
<feature type="binding site" evidence="1">
    <location>
        <position position="262"/>
    </location>
    <ligand>
        <name>Mn(2+)</name>
        <dbReference type="ChEBI" id="CHEBI:29035"/>
        <label>2</label>
    </ligand>
</feature>
<feature type="strand" evidence="2">
    <location>
        <begin position="2"/>
        <end position="6"/>
    </location>
</feature>
<feature type="helix" evidence="2">
    <location>
        <begin position="13"/>
        <end position="24"/>
    </location>
</feature>
<feature type="strand" evidence="2">
    <location>
        <begin position="28"/>
        <end position="32"/>
    </location>
</feature>
<feature type="helix" evidence="2">
    <location>
        <begin position="34"/>
        <end position="36"/>
    </location>
</feature>
<feature type="strand" evidence="2">
    <location>
        <begin position="37"/>
        <end position="41"/>
    </location>
</feature>
<feature type="strand" evidence="2">
    <location>
        <begin position="47"/>
        <end position="50"/>
    </location>
</feature>
<feature type="strand" evidence="2">
    <location>
        <begin position="60"/>
        <end position="63"/>
    </location>
</feature>
<feature type="strand" evidence="2">
    <location>
        <begin position="67"/>
        <end position="69"/>
    </location>
</feature>
<feature type="helix" evidence="2">
    <location>
        <begin position="71"/>
        <end position="82"/>
    </location>
</feature>
<feature type="strand" evidence="2">
    <location>
        <begin position="86"/>
        <end position="89"/>
    </location>
</feature>
<feature type="helix" evidence="2">
    <location>
        <begin position="91"/>
        <end position="98"/>
    </location>
</feature>
<feature type="helix" evidence="2">
    <location>
        <begin position="100"/>
        <end position="109"/>
    </location>
</feature>
<feature type="strand" evidence="2">
    <location>
        <begin position="117"/>
        <end position="122"/>
    </location>
</feature>
<feature type="helix" evidence="2">
    <location>
        <begin position="126"/>
        <end position="132"/>
    </location>
</feature>
<feature type="strand" evidence="2">
    <location>
        <begin position="135"/>
        <end position="144"/>
    </location>
</feature>
<feature type="strand" evidence="2">
    <location>
        <begin position="151"/>
        <end position="156"/>
    </location>
</feature>
<feature type="helix" evidence="2">
    <location>
        <begin position="157"/>
        <end position="169"/>
    </location>
</feature>
<feature type="strand" evidence="2">
    <location>
        <begin position="173"/>
        <end position="178"/>
    </location>
</feature>
<feature type="helix" evidence="2">
    <location>
        <begin position="181"/>
        <end position="183"/>
    </location>
</feature>
<feature type="strand" evidence="2">
    <location>
        <begin position="185"/>
        <end position="193"/>
    </location>
</feature>
<feature type="strand" evidence="2">
    <location>
        <begin position="196"/>
        <end position="204"/>
    </location>
</feature>
<feature type="helix" evidence="2">
    <location>
        <begin position="214"/>
        <end position="216"/>
    </location>
</feature>
<feature type="helix" evidence="2">
    <location>
        <begin position="227"/>
        <end position="240"/>
    </location>
</feature>
<feature type="strand" evidence="2">
    <location>
        <begin position="243"/>
        <end position="252"/>
    </location>
</feature>
<feature type="strand" evidence="2">
    <location>
        <begin position="255"/>
        <end position="264"/>
    </location>
</feature>
<feature type="helix" evidence="2">
    <location>
        <begin position="268"/>
        <end position="274"/>
    </location>
</feature>
<feature type="helix" evidence="2">
    <location>
        <begin position="278"/>
        <end position="289"/>
    </location>
</feature>
<gene>
    <name evidence="1" type="primary">rimK</name>
    <name type="ordered locus">PSPTO_0234</name>
</gene>
<evidence type="ECO:0000255" key="1">
    <source>
        <dbReference type="HAMAP-Rule" id="MF_01552"/>
    </source>
</evidence>
<evidence type="ECO:0007829" key="2">
    <source>
        <dbReference type="PDB" id="7QYS"/>
    </source>
</evidence>
<proteinExistence type="evidence at protein level"/>
<organism>
    <name type="scientific">Pseudomonas syringae pv. tomato (strain ATCC BAA-871 / DC3000)</name>
    <dbReference type="NCBI Taxonomy" id="223283"/>
    <lineage>
        <taxon>Bacteria</taxon>
        <taxon>Pseudomonadati</taxon>
        <taxon>Pseudomonadota</taxon>
        <taxon>Gammaproteobacteria</taxon>
        <taxon>Pseudomonadales</taxon>
        <taxon>Pseudomonadaceae</taxon>
        <taxon>Pseudomonas</taxon>
    </lineage>
</organism>
<comment type="cofactor">
    <cofactor evidence="1">
        <name>Mg(2+)</name>
        <dbReference type="ChEBI" id="CHEBI:18420"/>
    </cofactor>
    <cofactor evidence="1">
        <name>Mn(2+)</name>
        <dbReference type="ChEBI" id="CHEBI:29035"/>
    </cofactor>
    <text evidence="1">Binds 2 magnesium or manganese ions per subunit.</text>
</comment>
<comment type="similarity">
    <text evidence="1">Belongs to the RimK family.</text>
</comment>
<keyword id="KW-0002">3D-structure</keyword>
<keyword id="KW-0067">ATP-binding</keyword>
<keyword id="KW-0436">Ligase</keyword>
<keyword id="KW-0460">Magnesium</keyword>
<keyword id="KW-0464">Manganese</keyword>
<keyword id="KW-0479">Metal-binding</keyword>
<keyword id="KW-0547">Nucleotide-binding</keyword>
<keyword id="KW-0648">Protein biosynthesis</keyword>
<keyword id="KW-1185">Reference proteome</keyword>
<reference key="1">
    <citation type="journal article" date="2003" name="Proc. Natl. Acad. Sci. U.S.A.">
        <title>The complete genome sequence of the Arabidopsis and tomato pathogen Pseudomonas syringae pv. tomato DC3000.</title>
        <authorList>
            <person name="Buell C.R."/>
            <person name="Joardar V."/>
            <person name="Lindeberg M."/>
            <person name="Selengut J."/>
            <person name="Paulsen I.T."/>
            <person name="Gwinn M.L."/>
            <person name="Dodson R.J."/>
            <person name="DeBoy R.T."/>
            <person name="Durkin A.S."/>
            <person name="Kolonay J.F."/>
            <person name="Madupu R."/>
            <person name="Daugherty S.C."/>
            <person name="Brinkac L.M."/>
            <person name="Beanan M.J."/>
            <person name="Haft D.H."/>
            <person name="Nelson W.C."/>
            <person name="Davidsen T.M."/>
            <person name="Zafar N."/>
            <person name="Zhou L."/>
            <person name="Liu J."/>
            <person name="Yuan Q."/>
            <person name="Khouri H.M."/>
            <person name="Fedorova N.B."/>
            <person name="Tran B."/>
            <person name="Russell D."/>
            <person name="Berry K.J."/>
            <person name="Utterback T.R."/>
            <person name="Van Aken S.E."/>
            <person name="Feldblyum T.V."/>
            <person name="D'Ascenzo M."/>
            <person name="Deng W.-L."/>
            <person name="Ramos A.R."/>
            <person name="Alfano J.R."/>
            <person name="Cartinhour S."/>
            <person name="Chatterjee A.K."/>
            <person name="Delaney T.P."/>
            <person name="Lazarowitz S.G."/>
            <person name="Martin G.B."/>
            <person name="Schneider D.J."/>
            <person name="Tang X."/>
            <person name="Bender C.L."/>
            <person name="White O."/>
            <person name="Fraser C.M."/>
            <person name="Collmer A."/>
        </authorList>
    </citation>
    <scope>NUCLEOTIDE SEQUENCE [LARGE SCALE GENOMIC DNA]</scope>
    <source>
        <strain>ATCC BAA-871 / DC3000</strain>
    </source>
</reference>